<sequence>MAPRSQSKSQREPLRKRSREDADNSNDTNEDAAIQEVDADFEEVAGLLGTDIADPDQKQKQKQSKDEKRLQELTKPKVSNTSEAEADEPGVNYSFEKADFSEPTMKAIKEMGFQKMTKVQAKTIPPLLAGRDVLGAAKTGSGKTLAFLLPAVELLYSLKIKPRNGTAVIIITPTRELALQIFGVARQLMEYHSQTCGIVIGGADRRQEATKLAKGVNLLVATPGRLLDHLKNTQGFVFLNLKALVIDEADRILEIGFEEEMKQIIKILPNEDRQTMLFSATQTTKVEDLARISLRPGPLYINVVPEKDVSTADGLEQGYVVCDSDKRFLLLFSFLKRNIKKKIIVFLSSCNSVKFYSELLNYIDLPVLDLHGKQKQQKRTNTFFEFCNAKQGILVCTDVAARGLDIPAVDWIIQFDPPDDPRDYIHRVGRTARGTDGKGKSLMFLTPSELGFLRYLKAANVPLNEYEFPANKIANVQSQLTKLIKTNYLLHQSAKDGYRAYLQAYSSHSLKTVYQIDKLDLVKVGKSFGFDVPPKVNITIGASGKSIEKKHKKQKRDRK</sequence>
<gene>
    <name type="primary">HAS1</name>
    <name type="ORF">LELG_03986</name>
</gene>
<keyword id="KW-0067">ATP-binding</keyword>
<keyword id="KW-0347">Helicase</keyword>
<keyword id="KW-0378">Hydrolase</keyword>
<keyword id="KW-0547">Nucleotide-binding</keyword>
<keyword id="KW-0539">Nucleus</keyword>
<keyword id="KW-1185">Reference proteome</keyword>
<keyword id="KW-0690">Ribosome biogenesis</keyword>
<keyword id="KW-0694">RNA-binding</keyword>
<keyword id="KW-0698">rRNA processing</keyword>
<accession>A5E2Z9</accession>
<evidence type="ECO:0000250" key="1"/>
<evidence type="ECO:0000255" key="2">
    <source>
        <dbReference type="PROSITE-ProRule" id="PRU00541"/>
    </source>
</evidence>
<evidence type="ECO:0000255" key="3">
    <source>
        <dbReference type="PROSITE-ProRule" id="PRU00542"/>
    </source>
</evidence>
<evidence type="ECO:0000256" key="4">
    <source>
        <dbReference type="SAM" id="MobiDB-lite"/>
    </source>
</evidence>
<evidence type="ECO:0000305" key="5"/>
<dbReference type="EC" id="3.6.4.13"/>
<dbReference type="EMBL" id="CH981528">
    <property type="protein sequence ID" value="EDK45807.1"/>
    <property type="molecule type" value="Genomic_DNA"/>
</dbReference>
<dbReference type="RefSeq" id="XP_001524954.1">
    <property type="nucleotide sequence ID" value="XM_001524904.1"/>
</dbReference>
<dbReference type="SMR" id="A5E2Z9"/>
<dbReference type="FunCoup" id="A5E2Z9">
    <property type="interactions" value="1184"/>
</dbReference>
<dbReference type="STRING" id="379508.A5E2Z9"/>
<dbReference type="GeneID" id="5232072"/>
<dbReference type="KEGG" id="lel:PVL30_004806"/>
<dbReference type="VEuPathDB" id="FungiDB:LELG_03986"/>
<dbReference type="eggNOG" id="KOG0342">
    <property type="taxonomic scope" value="Eukaryota"/>
</dbReference>
<dbReference type="HOGENOM" id="CLU_003041_26_5_1"/>
<dbReference type="InParanoid" id="A5E2Z9"/>
<dbReference type="OMA" id="LMEFHSQ"/>
<dbReference type="OrthoDB" id="10259640at2759"/>
<dbReference type="Proteomes" id="UP000001996">
    <property type="component" value="Unassembled WGS sequence"/>
</dbReference>
<dbReference type="GO" id="GO:0005635">
    <property type="term" value="C:nuclear envelope"/>
    <property type="evidence" value="ECO:0007669"/>
    <property type="project" value="EnsemblFungi"/>
</dbReference>
<dbReference type="GO" id="GO:0005730">
    <property type="term" value="C:nucleolus"/>
    <property type="evidence" value="ECO:0007669"/>
    <property type="project" value="UniProtKB-SubCell"/>
</dbReference>
<dbReference type="GO" id="GO:0030687">
    <property type="term" value="C:preribosome, large subunit precursor"/>
    <property type="evidence" value="ECO:0007669"/>
    <property type="project" value="EnsemblFungi"/>
</dbReference>
<dbReference type="GO" id="GO:0032040">
    <property type="term" value="C:small-subunit processome"/>
    <property type="evidence" value="ECO:0007669"/>
    <property type="project" value="EnsemblFungi"/>
</dbReference>
<dbReference type="GO" id="GO:0005524">
    <property type="term" value="F:ATP binding"/>
    <property type="evidence" value="ECO:0007669"/>
    <property type="project" value="UniProtKB-KW"/>
</dbReference>
<dbReference type="GO" id="GO:0016887">
    <property type="term" value="F:ATP hydrolysis activity"/>
    <property type="evidence" value="ECO:0007669"/>
    <property type="project" value="RHEA"/>
</dbReference>
<dbReference type="GO" id="GO:0042802">
    <property type="term" value="F:identical protein binding"/>
    <property type="evidence" value="ECO:0007669"/>
    <property type="project" value="EnsemblFungi"/>
</dbReference>
<dbReference type="GO" id="GO:0003723">
    <property type="term" value="F:RNA binding"/>
    <property type="evidence" value="ECO:0007669"/>
    <property type="project" value="UniProtKB-KW"/>
</dbReference>
<dbReference type="GO" id="GO:0003724">
    <property type="term" value="F:RNA helicase activity"/>
    <property type="evidence" value="ECO:0007669"/>
    <property type="project" value="UniProtKB-EC"/>
</dbReference>
<dbReference type="GO" id="GO:0000463">
    <property type="term" value="P:maturation of LSU-rRNA from tricistronic rRNA transcript (SSU-rRNA, 5.8S rRNA, LSU-rRNA)"/>
    <property type="evidence" value="ECO:0007669"/>
    <property type="project" value="EnsemblFungi"/>
</dbReference>
<dbReference type="GO" id="GO:0000462">
    <property type="term" value="P:maturation of SSU-rRNA from tricistronic rRNA transcript (SSU-rRNA, 5.8S rRNA, LSU-rRNA)"/>
    <property type="evidence" value="ECO:0007669"/>
    <property type="project" value="EnsemblFungi"/>
</dbReference>
<dbReference type="GO" id="GO:1990417">
    <property type="term" value="P:snoRNA release from pre-rRNA"/>
    <property type="evidence" value="ECO:0007669"/>
    <property type="project" value="EnsemblFungi"/>
</dbReference>
<dbReference type="CDD" id="cd17942">
    <property type="entry name" value="DEADc_DDX18"/>
    <property type="match status" value="1"/>
</dbReference>
<dbReference type="CDD" id="cd18787">
    <property type="entry name" value="SF2_C_DEAD"/>
    <property type="match status" value="1"/>
</dbReference>
<dbReference type="FunFam" id="3.40.50.300:FF:000379">
    <property type="entry name" value="RNA helicase"/>
    <property type="match status" value="1"/>
</dbReference>
<dbReference type="FunFam" id="3.40.50.300:FF:000460">
    <property type="entry name" value="RNA helicase"/>
    <property type="match status" value="1"/>
</dbReference>
<dbReference type="Gene3D" id="3.40.50.300">
    <property type="entry name" value="P-loop containing nucleotide triphosphate hydrolases"/>
    <property type="match status" value="2"/>
</dbReference>
<dbReference type="InterPro" id="IPR044773">
    <property type="entry name" value="DDX18/Has1_DEADc"/>
</dbReference>
<dbReference type="InterPro" id="IPR011545">
    <property type="entry name" value="DEAD/DEAH_box_helicase_dom"/>
</dbReference>
<dbReference type="InterPro" id="IPR014001">
    <property type="entry name" value="Helicase_ATP-bd"/>
</dbReference>
<dbReference type="InterPro" id="IPR001650">
    <property type="entry name" value="Helicase_C-like"/>
</dbReference>
<dbReference type="InterPro" id="IPR027417">
    <property type="entry name" value="P-loop_NTPase"/>
</dbReference>
<dbReference type="InterPro" id="IPR000629">
    <property type="entry name" value="RNA-helicase_DEAD-box_CS"/>
</dbReference>
<dbReference type="InterPro" id="IPR014014">
    <property type="entry name" value="RNA_helicase_DEAD_Q_motif"/>
</dbReference>
<dbReference type="InterPro" id="IPR025313">
    <property type="entry name" value="SPB4-like_CTE"/>
</dbReference>
<dbReference type="PANTHER" id="PTHR24031">
    <property type="entry name" value="RNA HELICASE"/>
    <property type="match status" value="1"/>
</dbReference>
<dbReference type="Pfam" id="PF13959">
    <property type="entry name" value="CTE_SPB4"/>
    <property type="match status" value="1"/>
</dbReference>
<dbReference type="Pfam" id="PF00270">
    <property type="entry name" value="DEAD"/>
    <property type="match status" value="1"/>
</dbReference>
<dbReference type="Pfam" id="PF00271">
    <property type="entry name" value="Helicase_C"/>
    <property type="match status" value="1"/>
</dbReference>
<dbReference type="SMART" id="SM00487">
    <property type="entry name" value="DEXDc"/>
    <property type="match status" value="1"/>
</dbReference>
<dbReference type="SMART" id="SM01178">
    <property type="entry name" value="DUF4217"/>
    <property type="match status" value="1"/>
</dbReference>
<dbReference type="SMART" id="SM00490">
    <property type="entry name" value="HELICc"/>
    <property type="match status" value="1"/>
</dbReference>
<dbReference type="SUPFAM" id="SSF52540">
    <property type="entry name" value="P-loop containing nucleoside triphosphate hydrolases"/>
    <property type="match status" value="1"/>
</dbReference>
<dbReference type="PROSITE" id="PS00039">
    <property type="entry name" value="DEAD_ATP_HELICASE"/>
    <property type="match status" value="1"/>
</dbReference>
<dbReference type="PROSITE" id="PS51192">
    <property type="entry name" value="HELICASE_ATP_BIND_1"/>
    <property type="match status" value="1"/>
</dbReference>
<dbReference type="PROSITE" id="PS51194">
    <property type="entry name" value="HELICASE_CTER"/>
    <property type="match status" value="1"/>
</dbReference>
<dbReference type="PROSITE" id="PS51195">
    <property type="entry name" value="Q_MOTIF"/>
    <property type="match status" value="1"/>
</dbReference>
<reference key="1">
    <citation type="journal article" date="2009" name="Nature">
        <title>Evolution of pathogenicity and sexual reproduction in eight Candida genomes.</title>
        <authorList>
            <person name="Butler G."/>
            <person name="Rasmussen M.D."/>
            <person name="Lin M.F."/>
            <person name="Santos M.A.S."/>
            <person name="Sakthikumar S."/>
            <person name="Munro C.A."/>
            <person name="Rheinbay E."/>
            <person name="Grabherr M."/>
            <person name="Forche A."/>
            <person name="Reedy J.L."/>
            <person name="Agrafioti I."/>
            <person name="Arnaud M.B."/>
            <person name="Bates S."/>
            <person name="Brown A.J.P."/>
            <person name="Brunke S."/>
            <person name="Costanzo M.C."/>
            <person name="Fitzpatrick D.A."/>
            <person name="de Groot P.W.J."/>
            <person name="Harris D."/>
            <person name="Hoyer L.L."/>
            <person name="Hube B."/>
            <person name="Klis F.M."/>
            <person name="Kodira C."/>
            <person name="Lennard N."/>
            <person name="Logue M.E."/>
            <person name="Martin R."/>
            <person name="Neiman A.M."/>
            <person name="Nikolaou E."/>
            <person name="Quail M.A."/>
            <person name="Quinn J."/>
            <person name="Santos M.C."/>
            <person name="Schmitzberger F.F."/>
            <person name="Sherlock G."/>
            <person name="Shah P."/>
            <person name="Silverstein K.A.T."/>
            <person name="Skrzypek M.S."/>
            <person name="Soll D."/>
            <person name="Staggs R."/>
            <person name="Stansfield I."/>
            <person name="Stumpf M.P.H."/>
            <person name="Sudbery P.E."/>
            <person name="Srikantha T."/>
            <person name="Zeng Q."/>
            <person name="Berman J."/>
            <person name="Berriman M."/>
            <person name="Heitman J."/>
            <person name="Gow N.A.R."/>
            <person name="Lorenz M.C."/>
            <person name="Birren B.W."/>
            <person name="Kellis M."/>
            <person name="Cuomo C.A."/>
        </authorList>
    </citation>
    <scope>NUCLEOTIDE SEQUENCE [LARGE SCALE GENOMIC DNA]</scope>
    <source>
        <strain>ATCC 11503 / BCRC 21390 / CBS 2605 / JCM 1781 / NBRC 1676 / NRRL YB-4239</strain>
    </source>
</reference>
<name>HAS1_LODEL</name>
<comment type="function">
    <text>ATP-dependent RNA helicase involved in 40S ribosomal subunit biogenesis. Required for the processing and cleavage of 35S pre-rRNA at sites A0, A1, and A2, leading to mature 18S rRNA.</text>
</comment>
<comment type="catalytic activity">
    <reaction>
        <text>ATP + H2O = ADP + phosphate + H(+)</text>
        <dbReference type="Rhea" id="RHEA:13065"/>
        <dbReference type="ChEBI" id="CHEBI:15377"/>
        <dbReference type="ChEBI" id="CHEBI:15378"/>
        <dbReference type="ChEBI" id="CHEBI:30616"/>
        <dbReference type="ChEBI" id="CHEBI:43474"/>
        <dbReference type="ChEBI" id="CHEBI:456216"/>
        <dbReference type="EC" id="3.6.4.13"/>
    </reaction>
</comment>
<comment type="subunit">
    <text evidence="1">Associates in the nucleolus with the 60S and pre-60S ribosomal subunits.</text>
</comment>
<comment type="subcellular location">
    <subcellularLocation>
        <location evidence="1">Nucleus</location>
        <location evidence="1">Nucleolus</location>
    </subcellularLocation>
</comment>
<comment type="domain">
    <text>The Q motif is unique to and characteristic of the DEAD box family of RNA helicases and controls ATP binding and hydrolysis.</text>
</comment>
<comment type="similarity">
    <text evidence="5">Belongs to the DEAD box helicase family. DDX18/HAS1 subfamily.</text>
</comment>
<proteinExistence type="inferred from homology"/>
<organism>
    <name type="scientific">Lodderomyces elongisporus (strain ATCC 11503 / CBS 2605 / JCM 1781 / NBRC 1676 / NRRL YB-4239)</name>
    <name type="common">Yeast</name>
    <name type="synonym">Saccharomyces elongisporus</name>
    <dbReference type="NCBI Taxonomy" id="379508"/>
    <lineage>
        <taxon>Eukaryota</taxon>
        <taxon>Fungi</taxon>
        <taxon>Dikarya</taxon>
        <taxon>Ascomycota</taxon>
        <taxon>Saccharomycotina</taxon>
        <taxon>Pichiomycetes</taxon>
        <taxon>Debaryomycetaceae</taxon>
        <taxon>Candida/Lodderomyces clade</taxon>
        <taxon>Lodderomyces</taxon>
    </lineage>
</organism>
<feature type="chain" id="PRO_0000294625" description="ATP-dependent RNA helicase HAS1">
    <location>
        <begin position="1"/>
        <end position="559"/>
    </location>
</feature>
<feature type="domain" description="Helicase ATP-binding" evidence="2">
    <location>
        <begin position="124"/>
        <end position="300"/>
    </location>
</feature>
<feature type="domain" description="Helicase C-terminal" evidence="3">
    <location>
        <begin position="314"/>
        <end position="484"/>
    </location>
</feature>
<feature type="region of interest" description="Disordered" evidence="4">
    <location>
        <begin position="1"/>
        <end position="90"/>
    </location>
</feature>
<feature type="short sequence motif" description="Q motif">
    <location>
        <begin position="93"/>
        <end position="121"/>
    </location>
</feature>
<feature type="short sequence motif" description="DEAD box">
    <location>
        <begin position="247"/>
        <end position="250"/>
    </location>
</feature>
<feature type="compositionally biased region" description="Basic and acidic residues" evidence="4">
    <location>
        <begin position="9"/>
        <end position="22"/>
    </location>
</feature>
<feature type="compositionally biased region" description="Basic and acidic residues" evidence="4">
    <location>
        <begin position="55"/>
        <end position="75"/>
    </location>
</feature>
<feature type="binding site" evidence="2">
    <location>
        <begin position="137"/>
        <end position="144"/>
    </location>
    <ligand>
        <name>ATP</name>
        <dbReference type="ChEBI" id="CHEBI:30616"/>
    </ligand>
</feature>
<protein>
    <recommendedName>
        <fullName>ATP-dependent RNA helicase HAS1</fullName>
        <ecNumber>3.6.4.13</ecNumber>
    </recommendedName>
</protein>